<protein>
    <recommendedName>
        <fullName evidence="1">Glycine--tRNA ligase beta subunit</fullName>
        <ecNumber evidence="1">6.1.1.14</ecNumber>
    </recommendedName>
    <alternativeName>
        <fullName evidence="1">Glycyl-tRNA synthetase beta subunit</fullName>
        <shortName evidence="1">GlyRS</shortName>
    </alternativeName>
</protein>
<sequence>MTQQTFLVEIGTEELPPKALRSLAESFAANFTAELDNANLSHGEVSWYAAPRRLAVKVANLSAAQADREVEKRGPAIAQAFDAEGKPSKAAEGWARGCGITVDQAERLVTDKGEWLLYRAHVKGQPAQLLLAGMVNTALSKLPIPKLMRWGDKETQFVRPVHTVTLLLGTEVIPGTVLGINSDRVIRGHRFMGEAEFTIDSADQYPQILLERGKVIADYELRKSIIKRDAEQAAQQIGGVADLSESLLEEVASLVEWPVVLTAKFEEKFLAVPAEALVYTMKGDQKYFPVYDTAGHLMPHFIFVANIESKDPQQIISGNEKVVRPRLADAEFFFKTDRKKRLEDNLPRLETVLFQQQLGTLRDKTDRIQALAGWVAAQIGADVNHATRAGLLSKCDLMTNMVFEFTDTQGVMGMHYARHDGEAEDVAVALNEQYQPRFAGDDLPSNPVACALAIADKMDTLAGIFGIGQHPKGDKDPFALRRAALGVLRIIVEKNLSLDLQTLTEEAVRLYGSKLTNAKVVDDVIEFMLGRFRAWYQDEGHSVDTIQAVLARRPTKPADFDARVKAVTYFRTLDAAAALAAANKRVSNILAKSTDTLNDHVHASILKEPAELKLATHLVVLRDQLEPVFAAGQYKEALVELAALRETVDEFFESVMVMAEDDAVRVNRLTLLSKLRELFLQVADISLLQ</sequence>
<feature type="chain" id="PRO_1000006423" description="Glycine--tRNA ligase beta subunit">
    <location>
        <begin position="1"/>
        <end position="689"/>
    </location>
</feature>
<organism>
    <name type="scientific">Yersinia pestis bv. Antiqua (strain Antiqua)</name>
    <dbReference type="NCBI Taxonomy" id="360102"/>
    <lineage>
        <taxon>Bacteria</taxon>
        <taxon>Pseudomonadati</taxon>
        <taxon>Pseudomonadota</taxon>
        <taxon>Gammaproteobacteria</taxon>
        <taxon>Enterobacterales</taxon>
        <taxon>Yersiniaceae</taxon>
        <taxon>Yersinia</taxon>
    </lineage>
</organism>
<proteinExistence type="inferred from homology"/>
<gene>
    <name evidence="1" type="primary">glyS</name>
    <name type="ordered locus">YPA_3012</name>
</gene>
<evidence type="ECO:0000255" key="1">
    <source>
        <dbReference type="HAMAP-Rule" id="MF_00255"/>
    </source>
</evidence>
<reference key="1">
    <citation type="journal article" date="2006" name="J. Bacteriol.">
        <title>Complete genome sequence of Yersinia pestis strains Antiqua and Nepal516: evidence of gene reduction in an emerging pathogen.</title>
        <authorList>
            <person name="Chain P.S.G."/>
            <person name="Hu P."/>
            <person name="Malfatti S.A."/>
            <person name="Radnedge L."/>
            <person name="Larimer F."/>
            <person name="Vergez L.M."/>
            <person name="Worsham P."/>
            <person name="Chu M.C."/>
            <person name="Andersen G.L."/>
        </authorList>
    </citation>
    <scope>NUCLEOTIDE SEQUENCE [LARGE SCALE GENOMIC DNA]</scope>
    <source>
        <strain>Antiqua</strain>
    </source>
</reference>
<accession>Q1C3J8</accession>
<name>SYGB_YERPA</name>
<dbReference type="EC" id="6.1.1.14" evidence="1"/>
<dbReference type="EMBL" id="CP000308">
    <property type="protein sequence ID" value="ABG14974.1"/>
    <property type="molecule type" value="Genomic_DNA"/>
</dbReference>
<dbReference type="RefSeq" id="WP_002209623.1">
    <property type="nucleotide sequence ID" value="NZ_CP009906.1"/>
</dbReference>
<dbReference type="SMR" id="Q1C3J8"/>
<dbReference type="GeneID" id="57974645"/>
<dbReference type="KEGG" id="ypa:YPA_3012"/>
<dbReference type="Proteomes" id="UP000001971">
    <property type="component" value="Chromosome"/>
</dbReference>
<dbReference type="GO" id="GO:0005829">
    <property type="term" value="C:cytosol"/>
    <property type="evidence" value="ECO:0007669"/>
    <property type="project" value="TreeGrafter"/>
</dbReference>
<dbReference type="GO" id="GO:0004814">
    <property type="term" value="F:arginine-tRNA ligase activity"/>
    <property type="evidence" value="ECO:0007669"/>
    <property type="project" value="InterPro"/>
</dbReference>
<dbReference type="GO" id="GO:0005524">
    <property type="term" value="F:ATP binding"/>
    <property type="evidence" value="ECO:0007669"/>
    <property type="project" value="UniProtKB-UniRule"/>
</dbReference>
<dbReference type="GO" id="GO:0004820">
    <property type="term" value="F:glycine-tRNA ligase activity"/>
    <property type="evidence" value="ECO:0007669"/>
    <property type="project" value="UniProtKB-UniRule"/>
</dbReference>
<dbReference type="GO" id="GO:0006420">
    <property type="term" value="P:arginyl-tRNA aminoacylation"/>
    <property type="evidence" value="ECO:0007669"/>
    <property type="project" value="InterPro"/>
</dbReference>
<dbReference type="GO" id="GO:0006426">
    <property type="term" value="P:glycyl-tRNA aminoacylation"/>
    <property type="evidence" value="ECO:0007669"/>
    <property type="project" value="UniProtKB-UniRule"/>
</dbReference>
<dbReference type="HAMAP" id="MF_00255">
    <property type="entry name" value="Gly_tRNA_synth_beta"/>
    <property type="match status" value="1"/>
</dbReference>
<dbReference type="InterPro" id="IPR008909">
    <property type="entry name" value="DALR_anticod-bd"/>
</dbReference>
<dbReference type="InterPro" id="IPR015944">
    <property type="entry name" value="Gly-tRNA-synth_bsu"/>
</dbReference>
<dbReference type="InterPro" id="IPR006194">
    <property type="entry name" value="Gly-tRNA-synth_heterodimer"/>
</dbReference>
<dbReference type="NCBIfam" id="TIGR00211">
    <property type="entry name" value="glyS"/>
    <property type="match status" value="1"/>
</dbReference>
<dbReference type="PANTHER" id="PTHR30075:SF2">
    <property type="entry name" value="GLYCINE--TRNA LIGASE, CHLOROPLASTIC_MITOCHONDRIAL 2"/>
    <property type="match status" value="1"/>
</dbReference>
<dbReference type="PANTHER" id="PTHR30075">
    <property type="entry name" value="GLYCYL-TRNA SYNTHETASE"/>
    <property type="match status" value="1"/>
</dbReference>
<dbReference type="Pfam" id="PF05746">
    <property type="entry name" value="DALR_1"/>
    <property type="match status" value="1"/>
</dbReference>
<dbReference type="Pfam" id="PF02092">
    <property type="entry name" value="tRNA_synt_2f"/>
    <property type="match status" value="1"/>
</dbReference>
<dbReference type="PRINTS" id="PR01045">
    <property type="entry name" value="TRNASYNTHGB"/>
</dbReference>
<dbReference type="SUPFAM" id="SSF109604">
    <property type="entry name" value="HD-domain/PDEase-like"/>
    <property type="match status" value="1"/>
</dbReference>
<dbReference type="PROSITE" id="PS50861">
    <property type="entry name" value="AA_TRNA_LIGASE_II_GLYAB"/>
    <property type="match status" value="1"/>
</dbReference>
<comment type="catalytic activity">
    <reaction evidence="1">
        <text>tRNA(Gly) + glycine + ATP = glycyl-tRNA(Gly) + AMP + diphosphate</text>
        <dbReference type="Rhea" id="RHEA:16013"/>
        <dbReference type="Rhea" id="RHEA-COMP:9664"/>
        <dbReference type="Rhea" id="RHEA-COMP:9683"/>
        <dbReference type="ChEBI" id="CHEBI:30616"/>
        <dbReference type="ChEBI" id="CHEBI:33019"/>
        <dbReference type="ChEBI" id="CHEBI:57305"/>
        <dbReference type="ChEBI" id="CHEBI:78442"/>
        <dbReference type="ChEBI" id="CHEBI:78522"/>
        <dbReference type="ChEBI" id="CHEBI:456215"/>
        <dbReference type="EC" id="6.1.1.14"/>
    </reaction>
</comment>
<comment type="subunit">
    <text evidence="1">Tetramer of two alpha and two beta subunits.</text>
</comment>
<comment type="subcellular location">
    <subcellularLocation>
        <location evidence="1">Cytoplasm</location>
    </subcellularLocation>
</comment>
<comment type="similarity">
    <text evidence="1">Belongs to the class-II aminoacyl-tRNA synthetase family.</text>
</comment>
<keyword id="KW-0030">Aminoacyl-tRNA synthetase</keyword>
<keyword id="KW-0067">ATP-binding</keyword>
<keyword id="KW-0963">Cytoplasm</keyword>
<keyword id="KW-0436">Ligase</keyword>
<keyword id="KW-0547">Nucleotide-binding</keyword>
<keyword id="KW-0648">Protein biosynthesis</keyword>